<comment type="function">
    <text evidence="5 9">Reversibly catalyzes the transfer of the carbamoyl group from carbamoyl phosphate (CP) to the N(epsilon) atom of ornithine (ORN) to produce L-citrulline, which is a substrate for argininosuccinate synthetase, the enzyme involved in the final step in arginine biosynthesis.</text>
</comment>
<comment type="catalytic activity">
    <reaction evidence="16">
        <text>carbamoyl phosphate + L-ornithine = L-citrulline + phosphate + H(+)</text>
        <dbReference type="Rhea" id="RHEA:19513"/>
        <dbReference type="ChEBI" id="CHEBI:15378"/>
        <dbReference type="ChEBI" id="CHEBI:43474"/>
        <dbReference type="ChEBI" id="CHEBI:46911"/>
        <dbReference type="ChEBI" id="CHEBI:57743"/>
        <dbReference type="ChEBI" id="CHEBI:58228"/>
        <dbReference type="EC" id="2.1.3.3"/>
    </reaction>
</comment>
<comment type="activity regulation">
    <text evidence="1 2 3 8">Reversely inhibited by N-(N-Sulfodiaminophosphinyl)-L-ornithine (PubMed:10747936). Zinc is an allosteric regulator of the substrate-bound enzyme and a competitive inhibitor of the free enzyme (PubMed:2105398, PubMed:2405164, PubMed:7048313).</text>
</comment>
<comment type="biophysicochemical properties">
    <kinetics>
        <KM evidence="9">10 uM for carbamoyl phosphate</KM>
        <KM evidence="5">50 uM for carbamoyl phosphate</KM>
        <KM evidence="10">0.18 mM for L-ornithine</KM>
        <KM evidence="5">0.32 mM for L-ornithine</KM>
        <KM evidence="9">5 mM for L-ornithine</KM>
        <Vmax evidence="10">0.29 umol/min/ug enzyme</Vmax>
        <text evidence="5">kcat is 14000 min(-1) for L-ornithine. kcat is 13000 min(-1) for carbamoyl phosphate.</text>
    </kinetics>
</comment>
<comment type="pathway">
    <text evidence="15">Amino-acid biosynthesis; L-arginine biosynthesis; L-arginine from L-ornithine and carbamoyl phosphate: step 1/3.</text>
</comment>
<comment type="subunit">
    <text evidence="1 6 7 9 11 12">In E.coli strain K12, trimer of identical or non-identical chains are composed of ArgI (I) and/or ArgF (F) (PubMed:4558857, PubMed:6369246, PubMed:789338). The trimer has the following composition: FFI, FFF, FII, III (PubMed:4558857, PubMed:6369246, PubMed:789338). E.coli strains B and W, which are known to contain only ArgI, produce only a trimer of identical chains (III).</text>
</comment>
<comment type="subcellular location">
    <subcellularLocation>
        <location evidence="15">Cytoplasm</location>
    </subcellularLocation>
</comment>
<comment type="similarity">
    <text evidence="15">Belongs to the aspartate/ornithine carbamoyltransferase superfamily. OTCase family.</text>
</comment>
<reference key="1">
    <citation type="journal article" date="1983" name="Nucleic Acids Res.">
        <title>The DNA sequence of argI from Escherichia coli K12.</title>
        <authorList>
            <person name="Bencini D.A."/>
            <person name="Houghton J.E."/>
            <person name="Hoover T.A."/>
            <person name="Foltermann K.F."/>
            <person name="Wild J.R."/>
            <person name="O'Donovan G.A."/>
        </authorList>
    </citation>
    <scope>NUCLEOTIDE SEQUENCE [GENOMIC DNA]</scope>
    <scope>SUBUNIT</scope>
</reference>
<reference key="2">
    <citation type="journal article" date="1988" name="Biochemistry">
        <title>Site-directed mutagenesis of Escherichia coli ornithine transcarbamoylase: role of arginine-57 in substrate binding and catalysis.</title>
        <authorList>
            <person name="Kuo L.C."/>
            <person name="Miller A.W."/>
            <person name="Lee S."/>
            <person name="Kozuma C."/>
        </authorList>
    </citation>
    <scope>NUCLEOTIDE SEQUENCE [GENOMIC DNA]</scope>
    <scope>FUNCTION</scope>
    <scope>CATALYTIC ACTIVITY</scope>
    <scope>MUTAGENESIS OF ARG-58</scope>
    <scope>BIOPHYSICOCHEMICAL PROPERTIES</scope>
</reference>
<reference key="3">
    <citation type="journal article" date="1995" name="Nucleic Acids Res.">
        <title>Analysis of the Escherichia coli genome VI: DNA sequence of the region from 92.8 through 100 minutes.</title>
        <authorList>
            <person name="Burland V.D."/>
            <person name="Plunkett G. III"/>
            <person name="Sofia H.J."/>
            <person name="Daniels D.L."/>
            <person name="Blattner F.R."/>
        </authorList>
    </citation>
    <scope>NUCLEOTIDE SEQUENCE [LARGE SCALE GENOMIC DNA]</scope>
    <source>
        <strain>K12 / MG1655 / ATCC 47076</strain>
    </source>
</reference>
<reference key="4">
    <citation type="journal article" date="1997" name="Science">
        <title>The complete genome sequence of Escherichia coli K-12.</title>
        <authorList>
            <person name="Blattner F.R."/>
            <person name="Plunkett G. III"/>
            <person name="Bloch C.A."/>
            <person name="Perna N.T."/>
            <person name="Burland V."/>
            <person name="Riley M."/>
            <person name="Collado-Vides J."/>
            <person name="Glasner J.D."/>
            <person name="Rode C.K."/>
            <person name="Mayhew G.F."/>
            <person name="Gregor J."/>
            <person name="Davis N.W."/>
            <person name="Kirkpatrick H.A."/>
            <person name="Goeden M.A."/>
            <person name="Rose D.J."/>
            <person name="Mau B."/>
            <person name="Shao Y."/>
        </authorList>
    </citation>
    <scope>NUCLEOTIDE SEQUENCE [LARGE SCALE GENOMIC DNA]</scope>
    <source>
        <strain>K12 / MG1655 / ATCC 47076</strain>
    </source>
</reference>
<reference key="5">
    <citation type="journal article" date="2006" name="Mol. Syst. Biol.">
        <title>Highly accurate genome sequences of Escherichia coli K-12 strains MG1655 and W3110.</title>
        <authorList>
            <person name="Hayashi K."/>
            <person name="Morooka N."/>
            <person name="Yamamoto Y."/>
            <person name="Fujita K."/>
            <person name="Isono K."/>
            <person name="Choi S."/>
            <person name="Ohtsubo E."/>
            <person name="Baba T."/>
            <person name="Wanner B.L."/>
            <person name="Mori H."/>
            <person name="Horiuchi T."/>
        </authorList>
    </citation>
    <scope>NUCLEOTIDE SEQUENCE [LARGE SCALE GENOMIC DNA]</scope>
    <source>
        <strain>K12 / W3110 / ATCC 27325 / DSM 5911</strain>
    </source>
</reference>
<reference key="6">
    <citation type="journal article" date="1997" name="Electrophoresis">
        <title>Comparing the predicted and observed properties of proteins encoded in the genome of Escherichia coli K-12.</title>
        <authorList>
            <person name="Link A.J."/>
            <person name="Robison K."/>
            <person name="Church G.M."/>
        </authorList>
    </citation>
    <scope>PROTEIN SEQUENCE OF 2-13</scope>
    <source>
        <strain>K12 / EMG2</strain>
    </source>
</reference>
<reference key="7">
    <citation type="journal article" date="1972" name="Eur. J. Biochem.">
        <title>The dual genetic control of ornithine carbamolytransferase in Escherichia coli. A case of bacterial hybrid enzymes.</title>
        <authorList>
            <person name="Legrain C."/>
            <person name="Halleux P."/>
            <person name="Stalon V."/>
            <person name="Glansdorff N."/>
        </authorList>
    </citation>
    <scope>SUBUNIT</scope>
</reference>
<reference key="8">
    <citation type="journal article" date="1976" name="J. Bacteriol.">
        <title>Escherichia coli ornithine carbamolytransferase isoenzymes: evolutionary significance and the isolation of lambdaargF and lambdaargI transducing bacteriophages.</title>
        <authorList>
            <person name="Legrain C."/>
            <person name="Stalon V."/>
            <person name="Glansdorff N."/>
        </authorList>
    </citation>
    <scope>FUNCTION</scope>
    <scope>BIOPHYSICOCHEMICAL PROPERTIES</scope>
    <scope>SUBUNIT</scope>
</reference>
<reference key="9">
    <citation type="journal article" date="1982" name="Proc. Natl. Acad. Sci. U.S.A.">
        <title>Zn(II)-induced cooperativity of Escherichia coli ornithine transcarbamoylase.</title>
        <authorList>
            <person name="Kuo L.C."/>
            <person name="Lipscomb W.N."/>
            <person name="Kantrowitz E.R."/>
        </authorList>
    </citation>
    <scope>ACTIVITY REGULATION</scope>
</reference>
<reference key="10">
    <citation type="journal article" date="1989" name="J. Biol. Chem.">
        <title>X-ray diffraction analysis on single crystals of recombinant Escherichia coli ornithine transcarbamoylase.</title>
        <authorList>
            <person name="Kuo L.C."/>
            <person name="Seaton B.A."/>
        </authorList>
    </citation>
    <scope>MUTAGENESIS OF ARG-58</scope>
</reference>
<reference key="11">
    <citation type="journal article" date="1990" name="J. Mol. Biol.">
        <title>Zn2+ regulation of ornithine transcarbamoylase. I. Mechanism of action.</title>
        <authorList>
            <person name="Lee S."/>
            <person name="Shen W.H."/>
            <person name="Miller A.W."/>
            <person name="Kuo L.C."/>
        </authorList>
    </citation>
    <scope>ACTIVITY REGULATION</scope>
</reference>
<reference key="12">
    <citation type="journal article" date="1990" name="J. Mol. Biol.">
        <title>Zn2+ regulation of ornithine transcarbamoylase. II. Metal binding site.</title>
        <authorList>
            <person name="Kuo L.C."/>
            <person name="Caron C."/>
            <person name="Lee S."/>
            <person name="Herzberg W."/>
        </authorList>
    </citation>
    <scope>MUTAGENESIS OF CYS-274</scope>
    <scope>ACTIVITY REGULATION</scope>
</reference>
<reference key="13">
    <citation type="journal article" date="1996" name="Protein Sci.">
        <title>Structural similarity between ornithine and aspartate transcarbamoylases of Escherichia coli: characterization of the active site and evidence for an interdomain carboxy-terminal helix in ornithine transcarbamoylase.</title>
        <authorList>
            <person name="Murata L.B."/>
            <person name="Schachman H.K."/>
        </authorList>
    </citation>
    <scope>MUTAGENESIS OF SER-56; LYS-87; ARG-320 AND ALA-326</scope>
    <scope>BIOPHYSICOCHEMICAL PROPERTIES</scope>
</reference>
<reference key="14">
    <citation type="journal article" date="1997" name="Electrophoresis">
        <title>Escherichia coli proteome analysis using the gene-protein database.</title>
        <authorList>
            <person name="VanBogelen R.A."/>
            <person name="Abshire K.Z."/>
            <person name="Moldover B."/>
            <person name="Olson E.R."/>
            <person name="Neidhardt F.C."/>
        </authorList>
    </citation>
    <scope>IDENTIFICATION BY 2D-GEL</scope>
</reference>
<reference key="15">
    <citation type="journal article" date="1997" name="Nat. Struct. Biol.">
        <title>Crystal structure at 2.8-A resolution of anabolic ornithine transcarbamylase from Escherichia coli.</title>
        <authorList>
            <person name="Jin L."/>
            <person name="Seaton B.A."/>
            <person name="Head J.F."/>
        </authorList>
    </citation>
    <scope>X-RAY CRYSTALLOGRAPHY (2.8 ANGSTROMS)</scope>
    <scope>SUBUNIT</scope>
</reference>
<reference key="16">
    <citation type="journal article" date="1997" name="Proc. Natl. Acad. Sci. U.S.A.">
        <title>Substrate-induced conformational change in a trimeric ornithine transcarbamoylase.</title>
        <authorList>
            <person name="Ha Y."/>
            <person name="McCann M.T."/>
            <person name="Tuchman M."/>
            <person name="Allewell N.M."/>
        </authorList>
    </citation>
    <scope>X-RAY CRYSTALLOGRAPHY (2.8 ANGSTROMS) IN COMPLEX WITH SUBSTRATE ANALOGS</scope>
    <scope>SUBUNIT</scope>
</reference>
<reference key="17">
    <citation type="journal article" date="2000" name="J. Biol. Chem.">
        <title>Mechanism of inactivation of ornithine transcarbamoylase by Ndelta -(N'-Sulfodiaminophosphinyl)-L-ornithine, a true transition state analogue? Crystal structure and implications for catalytic mechanism.</title>
        <authorList>
            <person name="Langley D.B."/>
            <person name="Templeton M.D."/>
            <person name="Fields B.A."/>
            <person name="Mitchell R.E."/>
            <person name="Collyer C.A."/>
        </authorList>
    </citation>
    <scope>X-RAY CRYSTALLOGRAPHY (1.7 ANGSTROMS) OF 2-333 IN COMPLEX WITH SUBSTRATE ANALOGS</scope>
    <scope>ACTIVITY REGULATION</scope>
    <scope>SUBUNIT</scope>
</reference>
<organism>
    <name type="scientific">Escherichia coli (strain K12)</name>
    <dbReference type="NCBI Taxonomy" id="83333"/>
    <lineage>
        <taxon>Bacteria</taxon>
        <taxon>Pseudomonadati</taxon>
        <taxon>Pseudomonadota</taxon>
        <taxon>Gammaproteobacteria</taxon>
        <taxon>Enterobacterales</taxon>
        <taxon>Enterobacteriaceae</taxon>
        <taxon>Escherichia</taxon>
    </lineage>
</organism>
<gene>
    <name evidence="14" type="primary">argI</name>
    <name type="ordered locus">b4254</name>
    <name type="ordered locus">JW4211</name>
</gene>
<sequence>MSGFYHKHFLKLLDFTPAELNSLLQLAAKLKADKKSGKEEAKLTGKNIALIFEKDSTRTRCSFEVAAYDQGARVTYLGPSGSQIGHKESIKDTARVLGRMYDGIQYRGYGQEIVETLAEYASVPVWNGLTNEFHPTQLLADLLTMQEHLPGKAFNEMTLVYAGDARNNMGNSMLEAAALTGLDLRLVAPQACWPEAALVTECRALAQQNGGNITLTEDVAKGVEGADFIYTDVWVSMGEAKEKWAERIALLREYQVNSKMMQLTGNPEVKFLHCLPAFHDDQTTLGKKMAEEFGLHGGMEVTDEVFESAASIVFDQAENRMHTIKAVMVATLSK</sequence>
<accession>P04391</accession>
<accession>Q2M655</accession>
<keyword id="KW-0002">3D-structure</keyword>
<keyword id="KW-0021">Allosteric enzyme</keyword>
<keyword id="KW-0028">Amino-acid biosynthesis</keyword>
<keyword id="KW-0055">Arginine biosynthesis</keyword>
<keyword id="KW-0963">Cytoplasm</keyword>
<keyword id="KW-0903">Direct protein sequencing</keyword>
<keyword id="KW-0479">Metal-binding</keyword>
<keyword id="KW-1185">Reference proteome</keyword>
<keyword id="KW-0808">Transferase</keyword>
<keyword id="KW-0862">Zinc</keyword>
<name>OTC1_ECOLI</name>
<evidence type="ECO:0000269" key="1">
    <source>
    </source>
</evidence>
<evidence type="ECO:0000269" key="2">
    <source>
    </source>
</evidence>
<evidence type="ECO:0000269" key="3">
    <source>
    </source>
</evidence>
<evidence type="ECO:0000269" key="4">
    <source>
    </source>
</evidence>
<evidence type="ECO:0000269" key="5">
    <source>
    </source>
</evidence>
<evidence type="ECO:0000269" key="6">
    <source>
    </source>
</evidence>
<evidence type="ECO:0000269" key="7">
    <source>
    </source>
</evidence>
<evidence type="ECO:0000269" key="8">
    <source>
    </source>
</evidence>
<evidence type="ECO:0000269" key="9">
    <source>
    </source>
</evidence>
<evidence type="ECO:0000269" key="10">
    <source>
    </source>
</evidence>
<evidence type="ECO:0000269" key="11">
    <source>
    </source>
</evidence>
<evidence type="ECO:0000269" key="12">
    <source>
    </source>
</evidence>
<evidence type="ECO:0000269" key="13">
    <source>
    </source>
</evidence>
<evidence type="ECO:0000303" key="14">
    <source>
    </source>
</evidence>
<evidence type="ECO:0000305" key="15"/>
<evidence type="ECO:0000305" key="16">
    <source>
    </source>
</evidence>
<evidence type="ECO:0007744" key="17">
    <source>
        <dbReference type="PDB" id="1DUV"/>
    </source>
</evidence>
<evidence type="ECO:0007744" key="18">
    <source>
        <dbReference type="PDB" id="2OTC"/>
    </source>
</evidence>
<evidence type="ECO:0007829" key="19">
    <source>
        <dbReference type="PDB" id="1AKM"/>
    </source>
</evidence>
<evidence type="ECO:0007829" key="20">
    <source>
        <dbReference type="PDB" id="1DUV"/>
    </source>
</evidence>
<evidence type="ECO:0007829" key="21">
    <source>
        <dbReference type="PDB" id="2OTC"/>
    </source>
</evidence>
<feature type="initiator methionine" description="Removed" evidence="13">
    <location>
        <position position="1"/>
    </location>
</feature>
<feature type="chain" id="PRO_0000112918" description="Ornithine carbamoyltransferase subunit I">
    <location>
        <begin position="2"/>
        <end position="334"/>
    </location>
</feature>
<feature type="binding site" evidence="1 12 17 18">
    <location>
        <begin position="56"/>
        <end position="59"/>
    </location>
    <ligand>
        <name>carbamoyl phosphate</name>
        <dbReference type="ChEBI" id="CHEBI:58228"/>
    </ligand>
</feature>
<feature type="binding site" evidence="1 12 17 18">
    <location>
        <position position="83"/>
    </location>
    <ligand>
        <name>carbamoyl phosphate</name>
        <dbReference type="ChEBI" id="CHEBI:58228"/>
    </ligand>
</feature>
<feature type="binding site" evidence="1 12 17 18">
    <location>
        <position position="107"/>
    </location>
    <ligand>
        <name>carbamoyl phosphate</name>
        <dbReference type="ChEBI" id="CHEBI:58228"/>
    </ligand>
</feature>
<feature type="binding site" evidence="1 12 17 18">
    <location>
        <begin position="134"/>
        <end position="137"/>
    </location>
    <ligand>
        <name>carbamoyl phosphate</name>
        <dbReference type="ChEBI" id="CHEBI:58228"/>
    </ligand>
</feature>
<feature type="binding site" evidence="1 12 17 18">
    <location>
        <position position="168"/>
    </location>
    <ligand>
        <name>L-ornithine</name>
        <dbReference type="ChEBI" id="CHEBI:46911"/>
    </ligand>
</feature>
<feature type="binding site" evidence="1 12 17 18">
    <location>
        <position position="232"/>
    </location>
    <ligand>
        <name>L-ornithine</name>
        <dbReference type="ChEBI" id="CHEBI:46911"/>
    </ligand>
</feature>
<feature type="binding site" evidence="1 12 17 18">
    <location>
        <begin position="236"/>
        <end position="237"/>
    </location>
    <ligand>
        <name>L-ornithine</name>
        <dbReference type="ChEBI" id="CHEBI:46911"/>
    </ligand>
</feature>
<feature type="binding site" evidence="1 12 17 18">
    <location>
        <begin position="274"/>
        <end position="275"/>
    </location>
    <ligand>
        <name>carbamoyl phosphate</name>
        <dbReference type="ChEBI" id="CHEBI:58228"/>
    </ligand>
</feature>
<feature type="binding site" evidence="3">
    <location>
        <position position="274"/>
    </location>
    <ligand>
        <name>Zn(2+)</name>
        <dbReference type="ChEBI" id="CHEBI:29105"/>
    </ligand>
</feature>
<feature type="binding site" evidence="1 17">
    <location>
        <position position="320"/>
    </location>
    <ligand>
        <name>carbamoyl phosphate</name>
        <dbReference type="ChEBI" id="CHEBI:58228"/>
    </ligand>
</feature>
<feature type="mutagenesis site" description="Much less active than the wild-type." evidence="10">
    <original>S</original>
    <variation>H</variation>
    <location>
        <position position="56"/>
    </location>
</feature>
<feature type="mutagenesis site" description="The mutant is drastically inefficient in catalysis, but affects only moderately the binding of carbamoyl phosphate." evidence="4 5">
    <original>R</original>
    <variation>G</variation>
    <location>
        <position position="58"/>
    </location>
</feature>
<feature type="mutagenesis site" description="Much less active than the wild-type." evidence="10">
    <original>K</original>
    <variation>Q</variation>
    <location>
        <position position="87"/>
    </location>
</feature>
<feature type="mutagenesis site" description="Zinc ion is no longer a tight-binding inhibitor and does not promote isomerization." evidence="3">
    <original>C</original>
    <variation>A</variation>
    <location>
        <position position="274"/>
    </location>
</feature>
<feature type="mutagenesis site" description="Much less active than the wild-type." evidence="10">
    <original>R</original>
    <variation>A</variation>
    <location>
        <position position="320"/>
    </location>
</feature>
<feature type="mutagenesis site" description="Activity greater than the wild-type and Km for ornithwinas increases about twofold." evidence="10">
    <original>A</original>
    <variation>G</variation>
    <location>
        <position position="326"/>
    </location>
</feature>
<feature type="sequence conflict" description="In Ref. 6; AA sequence." evidence="15" ref="6">
    <original>L</original>
    <variation>G</variation>
    <location>
        <position position="12"/>
    </location>
</feature>
<feature type="sequence conflict" description="In Ref. 1; CAA25037." evidence="15" ref="1">
    <original>E</original>
    <variation>Q</variation>
    <location>
        <position position="119"/>
    </location>
</feature>
<feature type="sequence conflict" description="In Ref. 1; CAA25037." evidence="15" ref="1">
    <original>A</original>
    <variation>R</variation>
    <location>
        <position position="121"/>
    </location>
</feature>
<feature type="sequence conflict" description="In Ref. 1; CAA25037." evidence="15" ref="1">
    <original>LADL</original>
    <variation>IEYK</variation>
    <location>
        <begin position="139"/>
        <end position="142"/>
    </location>
</feature>
<feature type="sequence conflict" description="In Ref. 1; CAA25037." evidence="15" ref="1">
    <original>E</original>
    <variation>Q</variation>
    <location>
        <position position="242"/>
    </location>
</feature>
<feature type="sequence conflict" description="In Ref. 1; CAA25037." evidence="15" ref="1">
    <original>R</original>
    <variation>A</variation>
    <location>
        <position position="252"/>
    </location>
</feature>
<feature type="sequence conflict" description="In Ref. 1; CAA25037." evidence="15" ref="1">
    <original>D</original>
    <variation>G</variation>
    <location>
        <position position="315"/>
    </location>
</feature>
<feature type="turn" evidence="21">
    <location>
        <begin position="3"/>
        <end position="6"/>
    </location>
</feature>
<feature type="helix" evidence="20">
    <location>
        <begin position="12"/>
        <end position="14"/>
    </location>
</feature>
<feature type="helix" evidence="20">
    <location>
        <begin position="17"/>
        <end position="35"/>
    </location>
</feature>
<feature type="strand" evidence="20">
    <location>
        <begin position="47"/>
        <end position="54"/>
    </location>
</feature>
<feature type="helix" evidence="20">
    <location>
        <begin position="58"/>
        <end position="69"/>
    </location>
</feature>
<feature type="strand" evidence="20">
    <location>
        <begin position="73"/>
        <end position="77"/>
    </location>
</feature>
<feature type="strand" evidence="20">
    <location>
        <begin position="79"/>
        <end position="82"/>
    </location>
</feature>
<feature type="turn" evidence="20">
    <location>
        <begin position="85"/>
        <end position="87"/>
    </location>
</feature>
<feature type="helix" evidence="20">
    <location>
        <begin position="90"/>
        <end position="97"/>
    </location>
</feature>
<feature type="turn" evidence="20">
    <location>
        <begin position="98"/>
        <end position="100"/>
    </location>
</feature>
<feature type="strand" evidence="20">
    <location>
        <begin position="102"/>
        <end position="107"/>
    </location>
</feature>
<feature type="helix" evidence="20">
    <location>
        <begin position="111"/>
        <end position="121"/>
    </location>
</feature>
<feature type="strand" evidence="20">
    <location>
        <begin position="125"/>
        <end position="128"/>
    </location>
</feature>
<feature type="helix" evidence="20">
    <location>
        <begin position="135"/>
        <end position="148"/>
    </location>
</feature>
<feature type="helix" evidence="20">
    <location>
        <begin position="154"/>
        <end position="156"/>
    </location>
</feature>
<feature type="strand" evidence="20">
    <location>
        <begin position="158"/>
        <end position="163"/>
    </location>
</feature>
<feature type="helix" evidence="20">
    <location>
        <begin position="168"/>
        <end position="180"/>
    </location>
</feature>
<feature type="strand" evidence="20">
    <location>
        <begin position="183"/>
        <end position="187"/>
    </location>
</feature>
<feature type="helix" evidence="20">
    <location>
        <begin position="190"/>
        <end position="192"/>
    </location>
</feature>
<feature type="helix" evidence="20">
    <location>
        <begin position="196"/>
        <end position="208"/>
    </location>
</feature>
<feature type="strand" evidence="20">
    <location>
        <begin position="212"/>
        <end position="217"/>
    </location>
</feature>
<feature type="helix" evidence="20">
    <location>
        <begin position="219"/>
        <end position="223"/>
    </location>
</feature>
<feature type="strand" evidence="20">
    <location>
        <begin position="227"/>
        <end position="231"/>
    </location>
</feature>
<feature type="helix" evidence="20">
    <location>
        <begin position="243"/>
        <end position="251"/>
    </location>
</feature>
<feature type="helix" evidence="20">
    <location>
        <begin position="252"/>
        <end position="254"/>
    </location>
</feature>
<feature type="helix" evidence="20">
    <location>
        <begin position="258"/>
        <end position="262"/>
    </location>
</feature>
<feature type="turn" evidence="19">
    <location>
        <begin position="263"/>
        <end position="265"/>
    </location>
</feature>
<feature type="strand" evidence="20">
    <location>
        <begin position="270"/>
        <end position="273"/>
    </location>
</feature>
<feature type="helix" evidence="20">
    <location>
        <begin position="284"/>
        <end position="292"/>
    </location>
</feature>
<feature type="strand" evidence="20">
    <location>
        <begin position="297"/>
        <end position="302"/>
    </location>
</feature>
<feature type="helix" evidence="20">
    <location>
        <begin position="303"/>
        <end position="306"/>
    </location>
</feature>
<feature type="strand" evidence="21">
    <location>
        <begin position="308"/>
        <end position="311"/>
    </location>
</feature>
<feature type="helix" evidence="20">
    <location>
        <begin position="313"/>
        <end position="332"/>
    </location>
</feature>
<dbReference type="EC" id="2.1.3.3" evidence="16"/>
<dbReference type="EMBL" id="X00210">
    <property type="protein sequence ID" value="CAA25037.1"/>
    <property type="molecule type" value="Genomic_DNA"/>
</dbReference>
<dbReference type="EMBL" id="J02842">
    <property type="protein sequence ID" value="AAA23483.1"/>
    <property type="molecule type" value="Genomic_DNA"/>
</dbReference>
<dbReference type="EMBL" id="U14003">
    <property type="protein sequence ID" value="AAA97150.1"/>
    <property type="molecule type" value="Genomic_DNA"/>
</dbReference>
<dbReference type="EMBL" id="U00096">
    <property type="protein sequence ID" value="AAC77211.1"/>
    <property type="molecule type" value="Genomic_DNA"/>
</dbReference>
<dbReference type="EMBL" id="AP009048">
    <property type="protein sequence ID" value="BAE78251.1"/>
    <property type="molecule type" value="Genomic_DNA"/>
</dbReference>
<dbReference type="PIR" id="A31314">
    <property type="entry name" value="OWECI"/>
</dbReference>
<dbReference type="RefSeq" id="NP_418675.1">
    <property type="nucleotide sequence ID" value="NC_000913.3"/>
</dbReference>
<dbReference type="PDB" id="1AKM">
    <property type="method" value="X-ray"/>
    <property type="resolution" value="2.80 A"/>
    <property type="chains" value="A/B/C=2-334"/>
</dbReference>
<dbReference type="PDB" id="1DUV">
    <property type="method" value="X-ray"/>
    <property type="resolution" value="1.70 A"/>
    <property type="chains" value="G/H/I=2-334"/>
</dbReference>
<dbReference type="PDB" id="2OTC">
    <property type="method" value="X-ray"/>
    <property type="resolution" value="2.80 A"/>
    <property type="chains" value="A/B/C/D/E/F/G/H/I=2-334"/>
</dbReference>
<dbReference type="PDBsum" id="1AKM"/>
<dbReference type="PDBsum" id="1DUV"/>
<dbReference type="PDBsum" id="2OTC"/>
<dbReference type="SMR" id="P04391"/>
<dbReference type="BioGRID" id="4262723">
    <property type="interactions" value="13"/>
</dbReference>
<dbReference type="ComplexPortal" id="CPX-5624">
    <property type="entry name" value="Ornithine transcarbamoylase complex, argIII variant"/>
</dbReference>
<dbReference type="ComplexPortal" id="CPX-5625">
    <property type="entry name" value="Ornithine transcarbamoylase complex, argFII variant"/>
</dbReference>
<dbReference type="ComplexPortal" id="CPX-5626">
    <property type="entry name" value="Ornithine transcarbamoylase complex, argFFI variant"/>
</dbReference>
<dbReference type="DIP" id="DIP-9143N"/>
<dbReference type="FunCoup" id="P04391">
    <property type="interactions" value="609"/>
</dbReference>
<dbReference type="IntAct" id="P04391">
    <property type="interactions" value="7"/>
</dbReference>
<dbReference type="STRING" id="511145.b4254"/>
<dbReference type="DrugBank" id="DB02965">
    <property type="generic name" value="Ndelta-(N'-Sulphodiaminophosphinyl)-L-Ornithine"/>
</dbReference>
<dbReference type="PaxDb" id="511145-b4254"/>
<dbReference type="EnsemblBacteria" id="AAC77211">
    <property type="protein sequence ID" value="AAC77211"/>
    <property type="gene ID" value="b4254"/>
</dbReference>
<dbReference type="GeneID" id="948774"/>
<dbReference type="KEGG" id="ecj:JW4211"/>
<dbReference type="KEGG" id="eco:b4254"/>
<dbReference type="KEGG" id="ecoc:C3026_22950"/>
<dbReference type="PATRIC" id="fig|1411691.4.peg.2450"/>
<dbReference type="EchoBASE" id="EB0067"/>
<dbReference type="eggNOG" id="COG0078">
    <property type="taxonomic scope" value="Bacteria"/>
</dbReference>
<dbReference type="HOGENOM" id="CLU_043846_3_1_6"/>
<dbReference type="InParanoid" id="P04391"/>
<dbReference type="OMA" id="VATDVWV"/>
<dbReference type="OrthoDB" id="9802587at2"/>
<dbReference type="PhylomeDB" id="P04391"/>
<dbReference type="BioCyc" id="EcoCyc:CHAINI-MONOMER"/>
<dbReference type="BioCyc" id="MetaCyc:CHAINI-MONOMER"/>
<dbReference type="BRENDA" id="2.1.3.3">
    <property type="organism ID" value="2026"/>
</dbReference>
<dbReference type="SABIO-RK" id="P04391"/>
<dbReference type="UniPathway" id="UPA00068">
    <property type="reaction ID" value="UER00112"/>
</dbReference>
<dbReference type="EvolutionaryTrace" id="P04391"/>
<dbReference type="PRO" id="PR:P04391"/>
<dbReference type="Proteomes" id="UP000000625">
    <property type="component" value="Chromosome"/>
</dbReference>
<dbReference type="GO" id="GO:0005737">
    <property type="term" value="C:cytoplasm"/>
    <property type="evidence" value="ECO:0007669"/>
    <property type="project" value="UniProtKB-SubCell"/>
</dbReference>
<dbReference type="GO" id="GO:0016597">
    <property type="term" value="F:amino acid binding"/>
    <property type="evidence" value="ECO:0007669"/>
    <property type="project" value="InterPro"/>
</dbReference>
<dbReference type="GO" id="GO:0046872">
    <property type="term" value="F:metal ion binding"/>
    <property type="evidence" value="ECO:0007669"/>
    <property type="project" value="UniProtKB-KW"/>
</dbReference>
<dbReference type="GO" id="GO:0004585">
    <property type="term" value="F:ornithine carbamoyltransferase activity"/>
    <property type="evidence" value="ECO:0000314"/>
    <property type="project" value="EcoCyc"/>
</dbReference>
<dbReference type="GO" id="GO:0042450">
    <property type="term" value="P:arginine biosynthetic process via ornithine"/>
    <property type="evidence" value="ECO:0000318"/>
    <property type="project" value="GO_Central"/>
</dbReference>
<dbReference type="GO" id="GO:0019240">
    <property type="term" value="P:citrulline biosynthetic process"/>
    <property type="evidence" value="ECO:0000314"/>
    <property type="project" value="ComplexPortal"/>
</dbReference>
<dbReference type="GO" id="GO:0006526">
    <property type="term" value="P:L-arginine biosynthetic process"/>
    <property type="evidence" value="ECO:0007669"/>
    <property type="project" value="UniProtKB-UniRule"/>
</dbReference>
<dbReference type="FunFam" id="3.40.50.1370:FF:000004">
    <property type="entry name" value="Ornithine carbamoyltransferase"/>
    <property type="match status" value="1"/>
</dbReference>
<dbReference type="Gene3D" id="3.40.50.1370">
    <property type="entry name" value="Aspartate/ornithine carbamoyltransferase"/>
    <property type="match status" value="2"/>
</dbReference>
<dbReference type="HAMAP" id="MF_01109">
    <property type="entry name" value="OTCase"/>
    <property type="match status" value="1"/>
</dbReference>
<dbReference type="InterPro" id="IPR006132">
    <property type="entry name" value="Asp/Orn_carbamoyltranf_P-bd"/>
</dbReference>
<dbReference type="InterPro" id="IPR006130">
    <property type="entry name" value="Asp/Orn_carbamoylTrfase"/>
</dbReference>
<dbReference type="InterPro" id="IPR036901">
    <property type="entry name" value="Asp/Orn_carbamoylTrfase_sf"/>
</dbReference>
<dbReference type="InterPro" id="IPR006131">
    <property type="entry name" value="Asp_carbamoyltransf_Asp/Orn-bd"/>
</dbReference>
<dbReference type="InterPro" id="IPR002292">
    <property type="entry name" value="Orn/put_carbamltrans"/>
</dbReference>
<dbReference type="InterPro" id="IPR024904">
    <property type="entry name" value="OTCase_ArgI"/>
</dbReference>
<dbReference type="NCBIfam" id="TIGR00658">
    <property type="entry name" value="orni_carb_tr"/>
    <property type="match status" value="1"/>
</dbReference>
<dbReference type="NCBIfam" id="NF009213">
    <property type="entry name" value="PRK12562.1"/>
    <property type="match status" value="1"/>
</dbReference>
<dbReference type="PANTHER" id="PTHR45753:SF4">
    <property type="entry name" value="ORNITHINE CARBAMOYLTRANSFERASE SUBUNIT F-RELATED"/>
    <property type="match status" value="1"/>
</dbReference>
<dbReference type="PANTHER" id="PTHR45753">
    <property type="entry name" value="ORNITHINE CARBAMOYLTRANSFERASE, MITOCHONDRIAL"/>
    <property type="match status" value="1"/>
</dbReference>
<dbReference type="Pfam" id="PF00185">
    <property type="entry name" value="OTCace"/>
    <property type="match status" value="1"/>
</dbReference>
<dbReference type="Pfam" id="PF02729">
    <property type="entry name" value="OTCace_N"/>
    <property type="match status" value="1"/>
</dbReference>
<dbReference type="PRINTS" id="PR00100">
    <property type="entry name" value="AOTCASE"/>
</dbReference>
<dbReference type="PRINTS" id="PR00102">
    <property type="entry name" value="OTCASE"/>
</dbReference>
<dbReference type="SUPFAM" id="SSF53671">
    <property type="entry name" value="Aspartate/ornithine carbamoyltransferase"/>
    <property type="match status" value="1"/>
</dbReference>
<dbReference type="PROSITE" id="PS00097">
    <property type="entry name" value="CARBAMOYLTRANSFERASE"/>
    <property type="match status" value="1"/>
</dbReference>
<proteinExistence type="evidence at protein level"/>
<protein>
    <recommendedName>
        <fullName evidence="14">Ornithine carbamoyltransferase subunit I</fullName>
        <shortName evidence="14">OTCase-1</shortName>
        <ecNumber evidence="16">2.1.3.3</ecNumber>
    </recommendedName>
</protein>